<comment type="function">
    <text evidence="1">Component of the sulfite reductase complex that catalyzes the 6-electron reduction of sulfite to sulfide. This is one of several activities required for the biosynthesis of L-cysteine from sulfate.</text>
</comment>
<comment type="catalytic activity">
    <reaction evidence="1">
        <text>hydrogen sulfide + 3 NADP(+) + 3 H2O = sulfite + 3 NADPH + 4 H(+)</text>
        <dbReference type="Rhea" id="RHEA:13801"/>
        <dbReference type="ChEBI" id="CHEBI:15377"/>
        <dbReference type="ChEBI" id="CHEBI:15378"/>
        <dbReference type="ChEBI" id="CHEBI:17359"/>
        <dbReference type="ChEBI" id="CHEBI:29919"/>
        <dbReference type="ChEBI" id="CHEBI:57783"/>
        <dbReference type="ChEBI" id="CHEBI:58349"/>
        <dbReference type="EC" id="1.8.1.2"/>
    </reaction>
</comment>
<comment type="cofactor">
    <cofactor evidence="1">
        <name>siroheme</name>
        <dbReference type="ChEBI" id="CHEBI:60052"/>
    </cofactor>
    <text evidence="1">Binds 1 siroheme per subunit.</text>
</comment>
<comment type="cofactor">
    <cofactor evidence="1">
        <name>[4Fe-4S] cluster</name>
        <dbReference type="ChEBI" id="CHEBI:49883"/>
    </cofactor>
    <text evidence="1">Binds 1 [4Fe-4S] cluster per subunit.</text>
</comment>
<comment type="pathway">
    <text evidence="1">Sulfur metabolism; hydrogen sulfide biosynthesis; hydrogen sulfide from sulfite (NADPH route): step 1/1.</text>
</comment>
<comment type="subunit">
    <text evidence="1">Alpha(8)-beta(8). The alpha component is a flavoprotein, the beta component is a hemoprotein.</text>
</comment>
<comment type="similarity">
    <text evidence="1">Belongs to the nitrite and sulfite reductase 4Fe-4S domain family.</text>
</comment>
<organism>
    <name type="scientific">Salmonella paratyphi A (strain AKU_12601)</name>
    <dbReference type="NCBI Taxonomy" id="554290"/>
    <lineage>
        <taxon>Bacteria</taxon>
        <taxon>Pseudomonadati</taxon>
        <taxon>Pseudomonadota</taxon>
        <taxon>Gammaproteobacteria</taxon>
        <taxon>Enterobacterales</taxon>
        <taxon>Enterobacteriaceae</taxon>
        <taxon>Salmonella</taxon>
    </lineage>
</organism>
<proteinExistence type="inferred from homology"/>
<protein>
    <recommendedName>
        <fullName evidence="1">Sulfite reductase [NADPH] hemoprotein beta-component</fullName>
        <shortName evidence="1">SiR-HP</shortName>
        <shortName evidence="1">SiRHP</shortName>
        <ecNumber evidence="1">1.8.1.2</ecNumber>
    </recommendedName>
</protein>
<name>CYSI_SALPK</name>
<gene>
    <name evidence="1" type="primary">cysI</name>
    <name type="ordered locus">SSPA2612</name>
</gene>
<feature type="chain" id="PRO_1000146659" description="Sulfite reductase [NADPH] hemoprotein beta-component">
    <location>
        <begin position="1"/>
        <end position="570"/>
    </location>
</feature>
<feature type="binding site" evidence="1">
    <location>
        <position position="434"/>
    </location>
    <ligand>
        <name>[4Fe-4S] cluster</name>
        <dbReference type="ChEBI" id="CHEBI:49883"/>
    </ligand>
</feature>
<feature type="binding site" evidence="1">
    <location>
        <position position="440"/>
    </location>
    <ligand>
        <name>[4Fe-4S] cluster</name>
        <dbReference type="ChEBI" id="CHEBI:49883"/>
    </ligand>
</feature>
<feature type="binding site" evidence="1">
    <location>
        <position position="479"/>
    </location>
    <ligand>
        <name>[4Fe-4S] cluster</name>
        <dbReference type="ChEBI" id="CHEBI:49883"/>
    </ligand>
</feature>
<feature type="binding site" evidence="1">
    <location>
        <position position="483"/>
    </location>
    <ligand>
        <name>[4Fe-4S] cluster</name>
        <dbReference type="ChEBI" id="CHEBI:49883"/>
    </ligand>
</feature>
<feature type="binding site" description="axial binding residue" evidence="1">
    <location>
        <position position="483"/>
    </location>
    <ligand>
        <name>siroheme</name>
        <dbReference type="ChEBI" id="CHEBI:60052"/>
    </ligand>
    <ligandPart>
        <name>Fe</name>
        <dbReference type="ChEBI" id="CHEBI:18248"/>
    </ligandPart>
</feature>
<sequence length="570" mass="64016">MSEKHPGPLVVEGKLSDAERMKRESNFLRGTIAEDLNDGLTGGFHGDNFLLIRFHGMYQQDDRDIRAERAAQKLEPRHAMLLRCRLPGGVITTTQWKAIDKFAADNTIYGSIRLTNRQTFQFHGILKKNVKPVHQMLHSVGLDALATANDMNRNVLCTSNPYESQLHAEAYEWAKKISEHLLPRTRAYAEIWLDQEKVATTDEEPILGQTYLPRKFKTTVVIPPQNDIDLHANDMNLVAIAENGKLVGFNLLVGGGLSIEHGNKKTYARTASEFGYLPLEHTLAVAEAVVTTQRDWGNRTDRKNAKTKYTLERVGVDTFKEEVERRAGIKFEPIRPYEFTGRGDRIGWVKGIDNNWHLTLFIENGRILDYSGRPLKTGLLEIAKIHQGEFRITANQNLIIASVPESQKAKIETLARDHGLMNAVKPQRENSMACVSFPTCPLAMAEAERFLPSFTDKVEAILEKHGIPDEHIVMRVTGCPNGCGRAMLAEIGLVGKAPGRYNLHLGGNRIGTRIPRMYKENITEPDILASLGELIGRWAKEREAGEGFGDFTVRAGIIRPVLDPARDFWE</sequence>
<evidence type="ECO:0000255" key="1">
    <source>
        <dbReference type="HAMAP-Rule" id="MF_01540"/>
    </source>
</evidence>
<accession>B5BEZ8</accession>
<dbReference type="EC" id="1.8.1.2" evidence="1"/>
<dbReference type="EMBL" id="FM200053">
    <property type="protein sequence ID" value="CAR60853.1"/>
    <property type="molecule type" value="Genomic_DNA"/>
</dbReference>
<dbReference type="RefSeq" id="WP_001290675.1">
    <property type="nucleotide sequence ID" value="NC_011147.1"/>
</dbReference>
<dbReference type="SMR" id="B5BEZ8"/>
<dbReference type="KEGG" id="sek:SSPA2612"/>
<dbReference type="HOGENOM" id="CLU_001975_3_2_6"/>
<dbReference type="UniPathway" id="UPA00140">
    <property type="reaction ID" value="UER00207"/>
</dbReference>
<dbReference type="Proteomes" id="UP000001869">
    <property type="component" value="Chromosome"/>
</dbReference>
<dbReference type="GO" id="GO:0009337">
    <property type="term" value="C:sulfite reductase complex (NADPH)"/>
    <property type="evidence" value="ECO:0007669"/>
    <property type="project" value="InterPro"/>
</dbReference>
<dbReference type="GO" id="GO:0051539">
    <property type="term" value="F:4 iron, 4 sulfur cluster binding"/>
    <property type="evidence" value="ECO:0007669"/>
    <property type="project" value="UniProtKB-KW"/>
</dbReference>
<dbReference type="GO" id="GO:0020037">
    <property type="term" value="F:heme binding"/>
    <property type="evidence" value="ECO:0007669"/>
    <property type="project" value="InterPro"/>
</dbReference>
<dbReference type="GO" id="GO:0046872">
    <property type="term" value="F:metal ion binding"/>
    <property type="evidence" value="ECO:0007669"/>
    <property type="project" value="UniProtKB-KW"/>
</dbReference>
<dbReference type="GO" id="GO:0050661">
    <property type="term" value="F:NADP binding"/>
    <property type="evidence" value="ECO:0007669"/>
    <property type="project" value="InterPro"/>
</dbReference>
<dbReference type="GO" id="GO:0050311">
    <property type="term" value="F:sulfite reductase (ferredoxin) activity"/>
    <property type="evidence" value="ECO:0007669"/>
    <property type="project" value="TreeGrafter"/>
</dbReference>
<dbReference type="GO" id="GO:0004783">
    <property type="term" value="F:sulfite reductase (NADPH) activity"/>
    <property type="evidence" value="ECO:0007669"/>
    <property type="project" value="UniProtKB-UniRule"/>
</dbReference>
<dbReference type="GO" id="GO:0019344">
    <property type="term" value="P:cysteine biosynthetic process"/>
    <property type="evidence" value="ECO:0007669"/>
    <property type="project" value="UniProtKB-KW"/>
</dbReference>
<dbReference type="GO" id="GO:0070814">
    <property type="term" value="P:hydrogen sulfide biosynthetic process"/>
    <property type="evidence" value="ECO:0007669"/>
    <property type="project" value="UniProtKB-UniRule"/>
</dbReference>
<dbReference type="GO" id="GO:0000103">
    <property type="term" value="P:sulfate assimilation"/>
    <property type="evidence" value="ECO:0007669"/>
    <property type="project" value="UniProtKB-UniRule"/>
</dbReference>
<dbReference type="FunFam" id="3.30.413.10:FF:000003">
    <property type="entry name" value="Sulfite reductase [NADPH] hemoprotein beta-component"/>
    <property type="match status" value="1"/>
</dbReference>
<dbReference type="FunFam" id="3.30.413.10:FF:000004">
    <property type="entry name" value="Sulfite reductase [NADPH] hemoprotein beta-component"/>
    <property type="match status" value="1"/>
</dbReference>
<dbReference type="Gene3D" id="3.30.413.10">
    <property type="entry name" value="Sulfite Reductase Hemoprotein, domain 1"/>
    <property type="match status" value="2"/>
</dbReference>
<dbReference type="HAMAP" id="MF_01540">
    <property type="entry name" value="CysI"/>
    <property type="match status" value="1"/>
</dbReference>
<dbReference type="InterPro" id="IPR011786">
    <property type="entry name" value="CysI"/>
</dbReference>
<dbReference type="InterPro" id="IPR005117">
    <property type="entry name" value="NiRdtase/SiRdtase_haem-b_fer"/>
</dbReference>
<dbReference type="InterPro" id="IPR036136">
    <property type="entry name" value="Nit/Sulf_reduc_fer-like_dom_sf"/>
</dbReference>
<dbReference type="InterPro" id="IPR006067">
    <property type="entry name" value="NO2/SO3_Rdtase_4Fe4S_dom"/>
</dbReference>
<dbReference type="InterPro" id="IPR045169">
    <property type="entry name" value="NO2/SO3_Rdtase_4Fe4S_prot"/>
</dbReference>
<dbReference type="InterPro" id="IPR045854">
    <property type="entry name" value="NO2/SO3_Rdtase_4Fe4S_sf"/>
</dbReference>
<dbReference type="InterPro" id="IPR006066">
    <property type="entry name" value="NO2/SO3_Rdtase_FeS/sirohaem_BS"/>
</dbReference>
<dbReference type="NCBIfam" id="TIGR02041">
    <property type="entry name" value="CysI"/>
    <property type="match status" value="1"/>
</dbReference>
<dbReference type="NCBIfam" id="NF010029">
    <property type="entry name" value="PRK13504.1"/>
    <property type="match status" value="1"/>
</dbReference>
<dbReference type="PANTHER" id="PTHR11493:SF47">
    <property type="entry name" value="SULFITE REDUCTASE [NADPH] SUBUNIT BETA"/>
    <property type="match status" value="1"/>
</dbReference>
<dbReference type="PANTHER" id="PTHR11493">
    <property type="entry name" value="SULFITE REDUCTASE [NADPH] SUBUNIT BETA-RELATED"/>
    <property type="match status" value="1"/>
</dbReference>
<dbReference type="Pfam" id="PF01077">
    <property type="entry name" value="NIR_SIR"/>
    <property type="match status" value="1"/>
</dbReference>
<dbReference type="Pfam" id="PF03460">
    <property type="entry name" value="NIR_SIR_ferr"/>
    <property type="match status" value="2"/>
</dbReference>
<dbReference type="PRINTS" id="PR00397">
    <property type="entry name" value="SIROHAEM"/>
</dbReference>
<dbReference type="SUPFAM" id="SSF56014">
    <property type="entry name" value="Nitrite and sulphite reductase 4Fe-4S domain-like"/>
    <property type="match status" value="2"/>
</dbReference>
<dbReference type="SUPFAM" id="SSF55124">
    <property type="entry name" value="Nitrite/Sulfite reductase N-terminal domain-like"/>
    <property type="match status" value="2"/>
</dbReference>
<dbReference type="PROSITE" id="PS00365">
    <property type="entry name" value="NIR_SIR"/>
    <property type="match status" value="1"/>
</dbReference>
<reference key="1">
    <citation type="journal article" date="2009" name="BMC Genomics">
        <title>Pseudogene accumulation in the evolutionary histories of Salmonella enterica serovars Paratyphi A and Typhi.</title>
        <authorList>
            <person name="Holt K.E."/>
            <person name="Thomson N.R."/>
            <person name="Wain J."/>
            <person name="Langridge G.C."/>
            <person name="Hasan R."/>
            <person name="Bhutta Z.A."/>
            <person name="Quail M.A."/>
            <person name="Norbertczak H."/>
            <person name="Walker D."/>
            <person name="Simmonds M."/>
            <person name="White B."/>
            <person name="Bason N."/>
            <person name="Mungall K."/>
            <person name="Dougan G."/>
            <person name="Parkhill J."/>
        </authorList>
    </citation>
    <scope>NUCLEOTIDE SEQUENCE [LARGE SCALE GENOMIC DNA]</scope>
    <source>
        <strain>AKU_12601</strain>
    </source>
</reference>
<keyword id="KW-0004">4Fe-4S</keyword>
<keyword id="KW-0028">Amino-acid biosynthesis</keyword>
<keyword id="KW-0198">Cysteine biosynthesis</keyword>
<keyword id="KW-0349">Heme</keyword>
<keyword id="KW-0408">Iron</keyword>
<keyword id="KW-0411">Iron-sulfur</keyword>
<keyword id="KW-0479">Metal-binding</keyword>
<keyword id="KW-0521">NADP</keyword>
<keyword id="KW-0560">Oxidoreductase</keyword>